<reference key="1">
    <citation type="journal article" date="2003" name="Nature">
        <title>Genome divergence in two Prochlorococcus ecotypes reflects oceanic niche differentiation.</title>
        <authorList>
            <person name="Rocap G."/>
            <person name="Larimer F.W."/>
            <person name="Lamerdin J.E."/>
            <person name="Malfatti S."/>
            <person name="Chain P."/>
            <person name="Ahlgren N.A."/>
            <person name="Arellano A."/>
            <person name="Coleman M."/>
            <person name="Hauser L."/>
            <person name="Hess W.R."/>
            <person name="Johnson Z.I."/>
            <person name="Land M.L."/>
            <person name="Lindell D."/>
            <person name="Post A.F."/>
            <person name="Regala W."/>
            <person name="Shah M."/>
            <person name="Shaw S.L."/>
            <person name="Steglich C."/>
            <person name="Sullivan M.B."/>
            <person name="Ting C.S."/>
            <person name="Tolonen A."/>
            <person name="Webb E.A."/>
            <person name="Zinser E.R."/>
            <person name="Chisholm S.W."/>
        </authorList>
    </citation>
    <scope>NUCLEOTIDE SEQUENCE [LARGE SCALE GENOMIC DNA]</scope>
    <source>
        <strain>MIT 9313</strain>
    </source>
</reference>
<gene>
    <name evidence="1" type="primary">rpsR</name>
    <name evidence="1" type="synonym">rps18</name>
    <name type="ordered locus">PMT_0740</name>
</gene>
<proteinExistence type="inferred from homology"/>
<dbReference type="EMBL" id="BX548175">
    <property type="protein sequence ID" value="CAE20915.1"/>
    <property type="molecule type" value="Genomic_DNA"/>
</dbReference>
<dbReference type="RefSeq" id="WP_011130118.1">
    <property type="nucleotide sequence ID" value="NC_005071.1"/>
</dbReference>
<dbReference type="SMR" id="Q7TUZ8"/>
<dbReference type="KEGG" id="pmt:PMT_0740"/>
<dbReference type="eggNOG" id="COG0238">
    <property type="taxonomic scope" value="Bacteria"/>
</dbReference>
<dbReference type="HOGENOM" id="CLU_148710_2_3_3"/>
<dbReference type="OrthoDB" id="9812008at2"/>
<dbReference type="Proteomes" id="UP000001423">
    <property type="component" value="Chromosome"/>
</dbReference>
<dbReference type="GO" id="GO:0022627">
    <property type="term" value="C:cytosolic small ribosomal subunit"/>
    <property type="evidence" value="ECO:0007669"/>
    <property type="project" value="TreeGrafter"/>
</dbReference>
<dbReference type="GO" id="GO:0070181">
    <property type="term" value="F:small ribosomal subunit rRNA binding"/>
    <property type="evidence" value="ECO:0007669"/>
    <property type="project" value="TreeGrafter"/>
</dbReference>
<dbReference type="GO" id="GO:0003735">
    <property type="term" value="F:structural constituent of ribosome"/>
    <property type="evidence" value="ECO:0007669"/>
    <property type="project" value="InterPro"/>
</dbReference>
<dbReference type="GO" id="GO:0006412">
    <property type="term" value="P:translation"/>
    <property type="evidence" value="ECO:0007669"/>
    <property type="project" value="UniProtKB-UniRule"/>
</dbReference>
<dbReference type="FunFam" id="4.10.640.10:FF:000002">
    <property type="entry name" value="30S ribosomal protein S18, chloroplastic"/>
    <property type="match status" value="1"/>
</dbReference>
<dbReference type="Gene3D" id="4.10.640.10">
    <property type="entry name" value="Ribosomal protein S18"/>
    <property type="match status" value="1"/>
</dbReference>
<dbReference type="HAMAP" id="MF_00270">
    <property type="entry name" value="Ribosomal_bS18"/>
    <property type="match status" value="1"/>
</dbReference>
<dbReference type="InterPro" id="IPR001648">
    <property type="entry name" value="Ribosomal_bS18"/>
</dbReference>
<dbReference type="InterPro" id="IPR018275">
    <property type="entry name" value="Ribosomal_bS18_CS"/>
</dbReference>
<dbReference type="InterPro" id="IPR036870">
    <property type="entry name" value="Ribosomal_bS18_sf"/>
</dbReference>
<dbReference type="NCBIfam" id="TIGR00165">
    <property type="entry name" value="S18"/>
    <property type="match status" value="1"/>
</dbReference>
<dbReference type="PANTHER" id="PTHR13479">
    <property type="entry name" value="30S RIBOSOMAL PROTEIN S18"/>
    <property type="match status" value="1"/>
</dbReference>
<dbReference type="PANTHER" id="PTHR13479:SF40">
    <property type="entry name" value="SMALL RIBOSOMAL SUBUNIT PROTEIN BS18M"/>
    <property type="match status" value="1"/>
</dbReference>
<dbReference type="Pfam" id="PF01084">
    <property type="entry name" value="Ribosomal_S18"/>
    <property type="match status" value="1"/>
</dbReference>
<dbReference type="PRINTS" id="PR00974">
    <property type="entry name" value="RIBOSOMALS18"/>
</dbReference>
<dbReference type="SUPFAM" id="SSF46911">
    <property type="entry name" value="Ribosomal protein S18"/>
    <property type="match status" value="1"/>
</dbReference>
<dbReference type="PROSITE" id="PS00057">
    <property type="entry name" value="RIBOSOMAL_S18"/>
    <property type="match status" value="1"/>
</dbReference>
<accession>Q7TUZ8</accession>
<feature type="chain" id="PRO_0000111207" description="Small ribosomal subunit protein bS18">
    <location>
        <begin position="1"/>
        <end position="73"/>
    </location>
</feature>
<comment type="function">
    <text evidence="1">Binds as a heterodimer with protein bS6 to the central domain of the 16S rRNA, where it helps stabilize the platform of the 30S subunit.</text>
</comment>
<comment type="subunit">
    <text evidence="1">Part of the 30S ribosomal subunit. Forms a tight heterodimer with protein bS6.</text>
</comment>
<comment type="similarity">
    <text evidence="1">Belongs to the bacterial ribosomal protein bS18 family.</text>
</comment>
<organism>
    <name type="scientific">Prochlorococcus marinus (strain MIT 9313)</name>
    <dbReference type="NCBI Taxonomy" id="74547"/>
    <lineage>
        <taxon>Bacteria</taxon>
        <taxon>Bacillati</taxon>
        <taxon>Cyanobacteriota</taxon>
        <taxon>Cyanophyceae</taxon>
        <taxon>Synechococcales</taxon>
        <taxon>Prochlorococcaceae</taxon>
        <taxon>Prochlorococcus</taxon>
    </lineage>
</organism>
<name>RS18_PROMM</name>
<keyword id="KW-1185">Reference proteome</keyword>
<keyword id="KW-0687">Ribonucleoprotein</keyword>
<keyword id="KW-0689">Ribosomal protein</keyword>
<keyword id="KW-0694">RNA-binding</keyword>
<keyword id="KW-0699">rRNA-binding</keyword>
<sequence length="73" mass="8311">MSSSFFKKRLSPIKPGDPIDYKDVDLLKKFITDRGKILPRRLTGLTSKQQRDLTNAVKRARIIALLPFVNPEG</sequence>
<evidence type="ECO:0000255" key="1">
    <source>
        <dbReference type="HAMAP-Rule" id="MF_00270"/>
    </source>
</evidence>
<evidence type="ECO:0000305" key="2"/>
<protein>
    <recommendedName>
        <fullName evidence="1">Small ribosomal subunit protein bS18</fullName>
    </recommendedName>
    <alternativeName>
        <fullName evidence="2">30S ribosomal protein S18</fullName>
    </alternativeName>
</protein>